<dbReference type="EC" id="5.3.1.9" evidence="1"/>
<dbReference type="EMBL" id="CP001173">
    <property type="protein sequence ID" value="ACI27860.1"/>
    <property type="molecule type" value="Genomic_DNA"/>
</dbReference>
<dbReference type="RefSeq" id="WP_000957642.1">
    <property type="nucleotide sequence ID" value="NC_011333.1"/>
</dbReference>
<dbReference type="SMR" id="B5Z8G1"/>
<dbReference type="KEGG" id="hpg:HPG27_1110"/>
<dbReference type="HOGENOM" id="CLU_017947_3_1_7"/>
<dbReference type="UniPathway" id="UPA00109">
    <property type="reaction ID" value="UER00181"/>
</dbReference>
<dbReference type="UniPathway" id="UPA00138"/>
<dbReference type="Proteomes" id="UP000001735">
    <property type="component" value="Chromosome"/>
</dbReference>
<dbReference type="GO" id="GO:0005829">
    <property type="term" value="C:cytosol"/>
    <property type="evidence" value="ECO:0007669"/>
    <property type="project" value="TreeGrafter"/>
</dbReference>
<dbReference type="GO" id="GO:0097367">
    <property type="term" value="F:carbohydrate derivative binding"/>
    <property type="evidence" value="ECO:0007669"/>
    <property type="project" value="InterPro"/>
</dbReference>
<dbReference type="GO" id="GO:0004347">
    <property type="term" value="F:glucose-6-phosphate isomerase activity"/>
    <property type="evidence" value="ECO:0007669"/>
    <property type="project" value="UniProtKB-UniRule"/>
</dbReference>
<dbReference type="GO" id="GO:0048029">
    <property type="term" value="F:monosaccharide binding"/>
    <property type="evidence" value="ECO:0007669"/>
    <property type="project" value="TreeGrafter"/>
</dbReference>
<dbReference type="GO" id="GO:0006094">
    <property type="term" value="P:gluconeogenesis"/>
    <property type="evidence" value="ECO:0007669"/>
    <property type="project" value="UniProtKB-UniRule"/>
</dbReference>
<dbReference type="GO" id="GO:0051156">
    <property type="term" value="P:glucose 6-phosphate metabolic process"/>
    <property type="evidence" value="ECO:0007669"/>
    <property type="project" value="TreeGrafter"/>
</dbReference>
<dbReference type="GO" id="GO:0006096">
    <property type="term" value="P:glycolytic process"/>
    <property type="evidence" value="ECO:0007669"/>
    <property type="project" value="UniProtKB-UniRule"/>
</dbReference>
<dbReference type="CDD" id="cd05015">
    <property type="entry name" value="SIS_PGI_1"/>
    <property type="match status" value="1"/>
</dbReference>
<dbReference type="CDD" id="cd05016">
    <property type="entry name" value="SIS_PGI_2"/>
    <property type="match status" value="1"/>
</dbReference>
<dbReference type="FunFam" id="1.10.1390.10:FF:000001">
    <property type="entry name" value="Glucose-6-phosphate isomerase"/>
    <property type="match status" value="1"/>
</dbReference>
<dbReference type="FunFam" id="3.40.50.10490:FF:000018">
    <property type="entry name" value="Glucose-6-phosphate isomerase"/>
    <property type="match status" value="1"/>
</dbReference>
<dbReference type="Gene3D" id="1.10.1390.10">
    <property type="match status" value="1"/>
</dbReference>
<dbReference type="Gene3D" id="3.40.50.10490">
    <property type="entry name" value="Glucose-6-phosphate isomerase like protein, domain 1"/>
    <property type="match status" value="2"/>
</dbReference>
<dbReference type="HAMAP" id="MF_00473">
    <property type="entry name" value="G6P_isomerase"/>
    <property type="match status" value="1"/>
</dbReference>
<dbReference type="InterPro" id="IPR001672">
    <property type="entry name" value="G6P_Isomerase"/>
</dbReference>
<dbReference type="InterPro" id="IPR023096">
    <property type="entry name" value="G6P_Isomerase_C"/>
</dbReference>
<dbReference type="InterPro" id="IPR018189">
    <property type="entry name" value="Phosphoglucose_isomerase_CS"/>
</dbReference>
<dbReference type="InterPro" id="IPR046348">
    <property type="entry name" value="SIS_dom_sf"/>
</dbReference>
<dbReference type="InterPro" id="IPR035476">
    <property type="entry name" value="SIS_PGI_1"/>
</dbReference>
<dbReference type="InterPro" id="IPR035482">
    <property type="entry name" value="SIS_PGI_2"/>
</dbReference>
<dbReference type="NCBIfam" id="NF001211">
    <property type="entry name" value="PRK00179.1"/>
    <property type="match status" value="1"/>
</dbReference>
<dbReference type="PANTHER" id="PTHR11469">
    <property type="entry name" value="GLUCOSE-6-PHOSPHATE ISOMERASE"/>
    <property type="match status" value="1"/>
</dbReference>
<dbReference type="PANTHER" id="PTHR11469:SF1">
    <property type="entry name" value="GLUCOSE-6-PHOSPHATE ISOMERASE"/>
    <property type="match status" value="1"/>
</dbReference>
<dbReference type="Pfam" id="PF00342">
    <property type="entry name" value="PGI"/>
    <property type="match status" value="1"/>
</dbReference>
<dbReference type="PRINTS" id="PR00662">
    <property type="entry name" value="G6PISOMERASE"/>
</dbReference>
<dbReference type="SUPFAM" id="SSF53697">
    <property type="entry name" value="SIS domain"/>
    <property type="match status" value="1"/>
</dbReference>
<dbReference type="PROSITE" id="PS00765">
    <property type="entry name" value="P_GLUCOSE_ISOMERASE_1"/>
    <property type="match status" value="1"/>
</dbReference>
<dbReference type="PROSITE" id="PS00174">
    <property type="entry name" value="P_GLUCOSE_ISOMERASE_2"/>
    <property type="match status" value="1"/>
</dbReference>
<dbReference type="PROSITE" id="PS51463">
    <property type="entry name" value="P_GLUCOSE_ISOMERASE_3"/>
    <property type="match status" value="1"/>
</dbReference>
<organism>
    <name type="scientific">Helicobacter pylori (strain G27)</name>
    <dbReference type="NCBI Taxonomy" id="563041"/>
    <lineage>
        <taxon>Bacteria</taxon>
        <taxon>Pseudomonadati</taxon>
        <taxon>Campylobacterota</taxon>
        <taxon>Epsilonproteobacteria</taxon>
        <taxon>Campylobacterales</taxon>
        <taxon>Helicobacteraceae</taxon>
        <taxon>Helicobacter</taxon>
    </lineage>
</organism>
<keyword id="KW-0963">Cytoplasm</keyword>
<keyword id="KW-0312">Gluconeogenesis</keyword>
<keyword id="KW-0324">Glycolysis</keyword>
<keyword id="KW-0413">Isomerase</keyword>
<keyword id="KW-1185">Reference proteome</keyword>
<sequence>MLTQLKTYPKLLKHYEEIKEVHMHDWFSKDKERASRYFVQFESLSLDYSKNRLNDTTLKLLFELADDCSLKEKIEAMFKGEKINTTEKRAVLHTALRSLNDAEILLDNMEVLKSVRSVLKRMRAFSDSVRSGKRLGYTNQVITDIVNIGIGGSDLGALMVCTALKRYGHPRLKMHFVSNVDGTQILDVLEKINPASTLFIVASKTFSTQETLTNALTARKWFVERSGDEKHIAKHFVAVSTNKEAVQQFGIDEHNMFEFWDFVGGRYSLWSAIGLSIMIYLGKKNFNALLKGAYLMDEHFRNAPFESNLPVLMGLIGVWYINFFQSKSHLIAPYDQYLRHFPKFIQQLDMESNGKRISKKGETIPYDTCPVVWGDMGINAQHAFFQLLHQGTHLIPIDFIASLDKKPNAKGHHEILFSNVLAQAQAFMKGKSYEEALGELLFKGLDKDEAKDLAHHRVFFGNRPSNILLLEKISPSNIGALVALYEHKVFVQGVIWDINSFDQWGVELGKELAVPILQELEGHKSNAYFDSSTKHLIELYKNYNQ</sequence>
<feature type="chain" id="PRO_1000125731" description="Glucose-6-phosphate isomerase">
    <location>
        <begin position="1"/>
        <end position="545"/>
    </location>
</feature>
<feature type="active site" description="Proton donor" evidence="1">
    <location>
        <position position="351"/>
    </location>
</feature>
<feature type="active site" evidence="1">
    <location>
        <position position="382"/>
    </location>
</feature>
<feature type="active site" evidence="1">
    <location>
        <position position="510"/>
    </location>
</feature>
<accession>B5Z8G1</accession>
<evidence type="ECO:0000255" key="1">
    <source>
        <dbReference type="HAMAP-Rule" id="MF_00473"/>
    </source>
</evidence>
<name>G6PI_HELPG</name>
<comment type="function">
    <text evidence="1">Catalyzes the reversible isomerization of glucose-6-phosphate to fructose-6-phosphate.</text>
</comment>
<comment type="catalytic activity">
    <reaction evidence="1">
        <text>alpha-D-glucose 6-phosphate = beta-D-fructose 6-phosphate</text>
        <dbReference type="Rhea" id="RHEA:11816"/>
        <dbReference type="ChEBI" id="CHEBI:57634"/>
        <dbReference type="ChEBI" id="CHEBI:58225"/>
        <dbReference type="EC" id="5.3.1.9"/>
    </reaction>
</comment>
<comment type="pathway">
    <text evidence="1">Carbohydrate biosynthesis; gluconeogenesis.</text>
</comment>
<comment type="pathway">
    <text evidence="1">Carbohydrate degradation; glycolysis; D-glyceraldehyde 3-phosphate and glycerone phosphate from D-glucose: step 2/4.</text>
</comment>
<comment type="subcellular location">
    <subcellularLocation>
        <location evidence="1">Cytoplasm</location>
    </subcellularLocation>
</comment>
<comment type="similarity">
    <text evidence="1">Belongs to the GPI family.</text>
</comment>
<proteinExistence type="inferred from homology"/>
<protein>
    <recommendedName>
        <fullName evidence="1">Glucose-6-phosphate isomerase</fullName>
        <shortName evidence="1">GPI</shortName>
        <ecNumber evidence="1">5.3.1.9</ecNumber>
    </recommendedName>
    <alternativeName>
        <fullName evidence="1">Phosphoglucose isomerase</fullName>
        <shortName evidence="1">PGI</shortName>
    </alternativeName>
    <alternativeName>
        <fullName evidence="1">Phosphohexose isomerase</fullName>
        <shortName evidence="1">PHI</shortName>
    </alternativeName>
</protein>
<gene>
    <name evidence="1" type="primary">pgi</name>
    <name type="ordered locus">HPG27_1110</name>
</gene>
<reference key="1">
    <citation type="journal article" date="2009" name="J. Bacteriol.">
        <title>The complete genome sequence of Helicobacter pylori strain G27.</title>
        <authorList>
            <person name="Baltrus D.A."/>
            <person name="Amieva M.R."/>
            <person name="Covacci A."/>
            <person name="Lowe T.M."/>
            <person name="Merrell D.S."/>
            <person name="Ottemann K.M."/>
            <person name="Stein M."/>
            <person name="Salama N.R."/>
            <person name="Guillemin K."/>
        </authorList>
    </citation>
    <scope>NUCLEOTIDE SEQUENCE [LARGE SCALE GENOMIC DNA]</scope>
    <source>
        <strain>G27</strain>
    </source>
</reference>